<proteinExistence type="inferred from homology"/>
<sequence>MDEMFDKLQAVADRYDELNELISDPEVIADTQRFMALSKEEGELRETVDKYHQYQDVTQQIADDDEMLHDKLDADMESMIKDELKELTAQKAALEEDIKVLLLPKDPNDDKNIIMEIHGAAGGDEASLFAADLFSMYSKYAERQGWQIEVVDENATEVGGFKEIVMMITGNKVYSKLKYENGAHRVQRVPVTESAGRVHTSTATVGVMPEEEDVDIDIDPKDIRTDVYRSSGAGGQHINKTSSAVRMTHLPTGIVVAMQDERSQQQNRAKAMQILRARVYDYYKQQEESAYNAERKSAVGTGDRSERIRTYNYPQNRVTDHRIGLTLNKLDRIMNGELDDIIDALIVSDQAAKLEDLKNNG</sequence>
<comment type="function">
    <text evidence="1">Peptide chain release factor 1 directs the termination of translation in response to the peptide chain termination codons UAG and UAA.</text>
</comment>
<comment type="subcellular location">
    <subcellularLocation>
        <location evidence="1">Cytoplasm</location>
    </subcellularLocation>
</comment>
<comment type="PTM">
    <text evidence="1">Methylated by PrmC. Methylation increases the termination efficiency of RF1.</text>
</comment>
<comment type="similarity">
    <text evidence="1">Belongs to the prokaryotic/mitochondrial release factor family.</text>
</comment>
<gene>
    <name evidence="1" type="primary">prfA</name>
    <name type="ordered locus">LVIS_1290</name>
</gene>
<evidence type="ECO:0000255" key="1">
    <source>
        <dbReference type="HAMAP-Rule" id="MF_00093"/>
    </source>
</evidence>
<protein>
    <recommendedName>
        <fullName evidence="1">Peptide chain release factor 1</fullName>
        <shortName evidence="1">RF-1</shortName>
    </recommendedName>
</protein>
<reference key="1">
    <citation type="journal article" date="2006" name="Proc. Natl. Acad. Sci. U.S.A.">
        <title>Comparative genomics of the lactic acid bacteria.</title>
        <authorList>
            <person name="Makarova K.S."/>
            <person name="Slesarev A."/>
            <person name="Wolf Y.I."/>
            <person name="Sorokin A."/>
            <person name="Mirkin B."/>
            <person name="Koonin E.V."/>
            <person name="Pavlov A."/>
            <person name="Pavlova N."/>
            <person name="Karamychev V."/>
            <person name="Polouchine N."/>
            <person name="Shakhova V."/>
            <person name="Grigoriev I."/>
            <person name="Lou Y."/>
            <person name="Rohksar D."/>
            <person name="Lucas S."/>
            <person name="Huang K."/>
            <person name="Goodstein D.M."/>
            <person name="Hawkins T."/>
            <person name="Plengvidhya V."/>
            <person name="Welker D."/>
            <person name="Hughes J."/>
            <person name="Goh Y."/>
            <person name="Benson A."/>
            <person name="Baldwin K."/>
            <person name="Lee J.-H."/>
            <person name="Diaz-Muniz I."/>
            <person name="Dosti B."/>
            <person name="Smeianov V."/>
            <person name="Wechter W."/>
            <person name="Barabote R."/>
            <person name="Lorca G."/>
            <person name="Altermann E."/>
            <person name="Barrangou R."/>
            <person name="Ganesan B."/>
            <person name="Xie Y."/>
            <person name="Rawsthorne H."/>
            <person name="Tamir D."/>
            <person name="Parker C."/>
            <person name="Breidt F."/>
            <person name="Broadbent J.R."/>
            <person name="Hutkins R."/>
            <person name="O'Sullivan D."/>
            <person name="Steele J."/>
            <person name="Unlu G."/>
            <person name="Saier M.H. Jr."/>
            <person name="Klaenhammer T."/>
            <person name="Richardson P."/>
            <person name="Kozyavkin S."/>
            <person name="Weimer B.C."/>
            <person name="Mills D.A."/>
        </authorList>
    </citation>
    <scope>NUCLEOTIDE SEQUENCE [LARGE SCALE GENOMIC DNA]</scope>
    <source>
        <strain>ATCC 367 / BCRC 12310 / CIP 105137 / JCM 1170 / LMG 11437 / NCIMB 947 / NCTC 947</strain>
    </source>
</reference>
<keyword id="KW-0963">Cytoplasm</keyword>
<keyword id="KW-0488">Methylation</keyword>
<keyword id="KW-0648">Protein biosynthesis</keyword>
<keyword id="KW-1185">Reference proteome</keyword>
<accession>Q03QX7</accession>
<organism>
    <name type="scientific">Levilactobacillus brevis (strain ATCC 367 / BCRC 12310 / CIP 105137 / JCM 1170 / LMG 11437 / NCIMB 947 / NCTC 947)</name>
    <name type="common">Lactobacillus brevis</name>
    <dbReference type="NCBI Taxonomy" id="387344"/>
    <lineage>
        <taxon>Bacteria</taxon>
        <taxon>Bacillati</taxon>
        <taxon>Bacillota</taxon>
        <taxon>Bacilli</taxon>
        <taxon>Lactobacillales</taxon>
        <taxon>Lactobacillaceae</taxon>
        <taxon>Levilactobacillus</taxon>
    </lineage>
</organism>
<dbReference type="EMBL" id="CP000416">
    <property type="protein sequence ID" value="ABJ64395.1"/>
    <property type="molecule type" value="Genomic_DNA"/>
</dbReference>
<dbReference type="RefSeq" id="WP_011668159.1">
    <property type="nucleotide sequence ID" value="NC_008497.1"/>
</dbReference>
<dbReference type="SMR" id="Q03QX7"/>
<dbReference type="STRING" id="387344.LVIS_1290"/>
<dbReference type="KEGG" id="lbr:LVIS_1290"/>
<dbReference type="eggNOG" id="COG0216">
    <property type="taxonomic scope" value="Bacteria"/>
</dbReference>
<dbReference type="HOGENOM" id="CLU_036856_0_1_9"/>
<dbReference type="Proteomes" id="UP000001652">
    <property type="component" value="Chromosome"/>
</dbReference>
<dbReference type="GO" id="GO:0005737">
    <property type="term" value="C:cytoplasm"/>
    <property type="evidence" value="ECO:0007669"/>
    <property type="project" value="UniProtKB-SubCell"/>
</dbReference>
<dbReference type="GO" id="GO:0016149">
    <property type="term" value="F:translation release factor activity, codon specific"/>
    <property type="evidence" value="ECO:0007669"/>
    <property type="project" value="UniProtKB-UniRule"/>
</dbReference>
<dbReference type="FunFam" id="3.30.160.20:FF:000004">
    <property type="entry name" value="Peptide chain release factor 1"/>
    <property type="match status" value="1"/>
</dbReference>
<dbReference type="FunFam" id="3.30.70.1660:FF:000002">
    <property type="entry name" value="Peptide chain release factor 1"/>
    <property type="match status" value="1"/>
</dbReference>
<dbReference type="FunFam" id="3.30.70.1660:FF:000004">
    <property type="entry name" value="Peptide chain release factor 1"/>
    <property type="match status" value="1"/>
</dbReference>
<dbReference type="Gene3D" id="3.30.160.20">
    <property type="match status" value="1"/>
</dbReference>
<dbReference type="Gene3D" id="3.30.70.1660">
    <property type="match status" value="2"/>
</dbReference>
<dbReference type="Gene3D" id="6.10.140.1950">
    <property type="match status" value="1"/>
</dbReference>
<dbReference type="HAMAP" id="MF_00093">
    <property type="entry name" value="Rel_fac_1"/>
    <property type="match status" value="1"/>
</dbReference>
<dbReference type="InterPro" id="IPR005139">
    <property type="entry name" value="PCRF"/>
</dbReference>
<dbReference type="InterPro" id="IPR000352">
    <property type="entry name" value="Pep_chain_release_fac_I"/>
</dbReference>
<dbReference type="InterPro" id="IPR045853">
    <property type="entry name" value="Pep_chain_release_fac_I_sf"/>
</dbReference>
<dbReference type="InterPro" id="IPR050057">
    <property type="entry name" value="Prokaryotic/Mito_RF"/>
</dbReference>
<dbReference type="InterPro" id="IPR004373">
    <property type="entry name" value="RF-1"/>
</dbReference>
<dbReference type="NCBIfam" id="TIGR00019">
    <property type="entry name" value="prfA"/>
    <property type="match status" value="1"/>
</dbReference>
<dbReference type="NCBIfam" id="NF001859">
    <property type="entry name" value="PRK00591.1"/>
    <property type="match status" value="1"/>
</dbReference>
<dbReference type="PANTHER" id="PTHR43804">
    <property type="entry name" value="LD18447P"/>
    <property type="match status" value="1"/>
</dbReference>
<dbReference type="PANTHER" id="PTHR43804:SF7">
    <property type="entry name" value="LD18447P"/>
    <property type="match status" value="1"/>
</dbReference>
<dbReference type="Pfam" id="PF03462">
    <property type="entry name" value="PCRF"/>
    <property type="match status" value="1"/>
</dbReference>
<dbReference type="Pfam" id="PF00472">
    <property type="entry name" value="RF-1"/>
    <property type="match status" value="1"/>
</dbReference>
<dbReference type="SMART" id="SM00937">
    <property type="entry name" value="PCRF"/>
    <property type="match status" value="1"/>
</dbReference>
<dbReference type="SUPFAM" id="SSF75620">
    <property type="entry name" value="Release factor"/>
    <property type="match status" value="1"/>
</dbReference>
<dbReference type="PROSITE" id="PS00745">
    <property type="entry name" value="RF_PROK_I"/>
    <property type="match status" value="1"/>
</dbReference>
<name>RF1_LEVBA</name>
<feature type="chain" id="PRO_1000004900" description="Peptide chain release factor 1">
    <location>
        <begin position="1"/>
        <end position="361"/>
    </location>
</feature>
<feature type="modified residue" description="N5-methylglutamine" evidence="1">
    <location>
        <position position="236"/>
    </location>
</feature>